<protein>
    <recommendedName>
        <fullName>Sodium channel protein type 1 subunit alpha</fullName>
    </recommendedName>
    <alternativeName>
        <fullName>Sodium channel protein brain I subunit alpha</fullName>
    </alternativeName>
    <alternativeName>
        <fullName>Sodium channel protein type I subunit alpha</fullName>
    </alternativeName>
    <alternativeName>
        <fullName>Voltage-gated sodium channel subunit alpha Nav1.1</fullName>
    </alternativeName>
</protein>
<name>SCN1A_RAT</name>
<accession>P04774</accession>
<sequence>MEQTVLVPPGPDSFNFFTRESLAAIERRIAEEKAKNPKPDKKDDDENGPKPNSDLEAGKNLPFIYGDIPPEMVSEPLEDLDPYYINKKTFIVLNKGKAIFRFSATSALYILTPFNPLRKIAIKILVHSLFSMLIMCTILTNCVFMTMSNPPDWTKNVEYTFTGIYTFESLIKIIARGFCLEDFTFLRDPWNWLDFTVITFAYVTEFVDLGNVSALRTFRVLRALKTISVIPGLKTIVGALIQSVKKLSDVMILTVFCLSVFALIGLQLFMGNLRNKCVQWPPTNASLEEHSIEKNVTTDYNGTLVNETVFEFDWKSYIQDSRYHYFLEGVLDALLCGNSSDAGQCPEGYMCVKAGRNPNYGYTSFDTFSWAFLSLFRLMTQDFWENLYQLTLRAAGKTYMIFFVLVIFLGSFYLINLILAVVAMAYEEQNQATLEEAEQKEAEFQQMLEQLKKQQEAAQQAAAATASEHSREPSAAGRLSDSSSEASKLSSKSAKERRNRRKKRKQKEQSGGEEKDDDEFHKSESEDSIRRKGFRFSIEGNRLTYEKRYSSPHQSLLSIRGSLFSPRRNSRTSLFSFRGRAKDVGSENDFADDEHSTFEDNESRRDSLFVPRRHGERRNSNLSQTSRSSRMLAGLPANGKMHSTVDCNGVVSLVGGPSVPTSPVGQLLPEVIIDKPATDDNGTTTETEMRKRRSSSFHVSMDFLEDPSQRQRAMSIASILTNTVEELEESRQKCPPCWYKFSNIFLIWDCSPYWLKVKHIVNLVVMDPFVDLAITICIVLNTLFMAMEHYPMTEHFNHVLTVGNLVFTGIFTAEMFLKIIAMDPYYYFQEGWNIFDGFIVTLSLVELGLANVEGLSVLRSFRLLRVFKLAKSWPTLNMLIKIIGNSVGALGNLTLVLAIIVFIFAVVGMQLFGKSYKDCVCKIATDCKLPRWHMNDFFHSFLIVFRVLCGEWIETMWDCMEVAGQAMCLTVFMMVMVIRNLVVLNLFLALLLSSFSADNLAATDDDNEMNNLQIAVDRMHKGVAYVKRKIYEFIQQSFVRKQKILDEIKPLDDLNNRKDNCTSNHTTEIGKDLDCLKDVNGTTSGIGTGSSVEKYIIDESDYMSFINNPSLTVTVPIAVGESDFENLNTEDFSSESDLEESKEKLNESSSSSEGSTVDIGAPAEEQPVMEPEETLEPEACFTEGCVQRFKCCQISVEEGRGKQWWNLRRTCFRIVEHNWFETFIVFMILLSSGALAFEDIYIDQRKTIKTMLEYADKVFTYIFILEMLLKWVAYGYQTYFTNAWCWLDFLIVDVSLVSLTANALGYSELGAIKSLRTLRALRPLRALSRFEGMRVVVNALLGAIPSIMNVLLVCLIFWLIFSIMGVNLFAGKFYHCVNTTTGDTFEITEVNNHSDCLKLIERNETARWKNVKVNFDNVGFGYLSLLQVATFKGWMDIMYAAVDSRNVELQPKYEESLYMYLYFVIFIIFGSFFTLNLFIGVIIDNFNQQKKKFGGQDIFMTEEQKKYYNAMKKLGSKKPQKPIPRPGNKFQGMVFDFVTRQVFDISIMILICLNMVTMMVETDDQSDYVTSILSRINLVFIVLFTGECVLKLISLRHYYFTIGWNIFDFVVVILSIVGMFLAELIEKYFVSPTLFRVIRLARIGRILRLIKGAKGIRTLLFALMMSLPALFNIGLLLFLVMFIYAIFGMSNFAYVKREVGIDDMFNFETFGNSMICLFQITTSAGWDGLLAPILNSKPPDCDPNKVNPGSSVKGDCGNPSVGIFFFVSYIIISFLVVVNMYIAVILENFSVATEESAEPLSEDDFEMFYEVWEKFDPDATQFMEFEKLSQFAAALEPPLNLPQPNKLQLIAMDLPMVSGDRIHCLDILFAFTKRVLGESGEMDALRIQMEERFMASNPSKVSYQPITTTLKRKQEEVSAVIIQRAYRRHLLKRTVKQASFTYNKNKLKGGANLLVKEDMIIDRINENSITEKTDLTMSTAACPPSYDRVTKPIVEKHEQEGKDEKAKGK</sequence>
<gene>
    <name evidence="10" type="primary">Scn1a</name>
</gene>
<feature type="chain" id="PRO_0000048490" description="Sodium channel protein type 1 subunit alpha">
    <location>
        <begin position="1"/>
        <end position="2009"/>
    </location>
</feature>
<feature type="topological domain" description="Cytoplasmic" evidence="9">
    <location>
        <begin position="1"/>
        <end position="128"/>
    </location>
</feature>
<feature type="transmembrane region" description="Helical; Name=S1 of repeat I" evidence="3">
    <location>
        <begin position="129"/>
        <end position="146"/>
    </location>
</feature>
<feature type="topological domain" description="Extracellular" evidence="9">
    <location>
        <begin position="147"/>
        <end position="152"/>
    </location>
</feature>
<feature type="transmembrane region" description="Helical; Name=S2 of repeat I" evidence="3">
    <location>
        <begin position="153"/>
        <end position="177"/>
    </location>
</feature>
<feature type="topological domain" description="Cytoplasmic" evidence="9">
    <location>
        <begin position="178"/>
        <end position="188"/>
    </location>
</feature>
<feature type="transmembrane region" description="Helical; Name=S3 of repeat I" evidence="3">
    <location>
        <begin position="189"/>
        <end position="205"/>
    </location>
</feature>
<feature type="topological domain" description="Extracellular" evidence="9">
    <location>
        <begin position="206"/>
        <end position="213"/>
    </location>
</feature>
<feature type="transmembrane region" description="Helical; Name=S4 of repeat I" evidence="3">
    <location>
        <begin position="214"/>
        <end position="235"/>
    </location>
</feature>
<feature type="topological domain" description="Cytoplasmic" evidence="9">
    <location>
        <begin position="236"/>
        <end position="245"/>
    </location>
</feature>
<feature type="transmembrane region" description="Helical; Name=S5 of repeat I" evidence="3">
    <location>
        <begin position="246"/>
        <end position="269"/>
    </location>
</feature>
<feature type="topological domain" description="Extracellular" evidence="9">
    <location>
        <begin position="270"/>
        <end position="369"/>
    </location>
</feature>
<feature type="intramembrane region" description="Pore-forming" evidence="3">
    <location>
        <begin position="370"/>
        <end position="384"/>
    </location>
</feature>
<feature type="topological domain" description="Extracellular" evidence="9">
    <location>
        <begin position="385"/>
        <end position="397"/>
    </location>
</feature>
<feature type="transmembrane region" description="Helical; Name=S6 of repeat I" evidence="3">
    <location>
        <begin position="398"/>
        <end position="423"/>
    </location>
</feature>
<feature type="topological domain" description="Cytoplasmic" evidence="9">
    <location>
        <begin position="424"/>
        <end position="768"/>
    </location>
</feature>
<feature type="transmembrane region" description="Helical; Name=S1 of repeat II" evidence="3">
    <location>
        <begin position="769"/>
        <end position="787"/>
    </location>
</feature>
<feature type="topological domain" description="Extracellular" evidence="9">
    <location>
        <begin position="788"/>
        <end position="797"/>
    </location>
</feature>
<feature type="transmembrane region" description="Helical; Name=S2 of repeat II" evidence="3">
    <location>
        <begin position="798"/>
        <end position="820"/>
    </location>
</feature>
<feature type="topological domain" description="Cytoplasmic" evidence="9">
    <location>
        <begin position="821"/>
        <end position="830"/>
    </location>
</feature>
<feature type="transmembrane region" description="Helical; Name=S3 of repeat II" evidence="3">
    <location>
        <begin position="831"/>
        <end position="849"/>
    </location>
</feature>
<feature type="topological domain" description="Extracellular" evidence="9">
    <location>
        <begin position="850"/>
        <end position="854"/>
    </location>
</feature>
<feature type="transmembrane region" description="Helical; Name=S4 of repeat II" evidence="3">
    <location>
        <begin position="855"/>
        <end position="874"/>
    </location>
</feature>
<feature type="topological domain" description="Cytoplasmic" evidence="9">
    <location>
        <begin position="875"/>
        <end position="891"/>
    </location>
</feature>
<feature type="transmembrane region" description="Helical; Name=S5 of repeat II" evidence="3">
    <location>
        <begin position="892"/>
        <end position="912"/>
    </location>
</feature>
<feature type="topological domain" description="Extracellular" evidence="9">
    <location>
        <begin position="913"/>
        <end position="938"/>
    </location>
</feature>
<feature type="intramembrane region" description="Pore-forming" evidence="3">
    <location>
        <begin position="939"/>
        <end position="952"/>
    </location>
</feature>
<feature type="topological domain" description="Extracellular" evidence="9">
    <location>
        <begin position="953"/>
        <end position="965"/>
    </location>
</feature>
<feature type="transmembrane region" description="Helical; Name=S6 of repeat II" evidence="3">
    <location>
        <begin position="966"/>
        <end position="992"/>
    </location>
</feature>
<feature type="topological domain" description="Cytoplasmic" evidence="9">
    <location>
        <begin position="993"/>
        <end position="1218"/>
    </location>
</feature>
<feature type="transmembrane region" description="Helical; Name=S1 of repeat III" evidence="3">
    <location>
        <begin position="1219"/>
        <end position="1237"/>
    </location>
</feature>
<feature type="topological domain" description="Extracellular" evidence="9">
    <location>
        <begin position="1238"/>
        <end position="1250"/>
    </location>
</feature>
<feature type="transmembrane region" description="Helical; Name=S2 of repeat III" evidence="3">
    <location>
        <begin position="1251"/>
        <end position="1276"/>
    </location>
</feature>
<feature type="topological domain" description="Cytoplasmic" evidence="9">
    <location>
        <begin position="1277"/>
        <end position="1278"/>
    </location>
</feature>
<feature type="transmembrane region" description="Helical; Name=S3 of repeat III" evidence="3">
    <location>
        <begin position="1279"/>
        <end position="1304"/>
    </location>
</feature>
<feature type="topological domain" description="Extracellular" evidence="9">
    <location>
        <begin position="1305"/>
        <end position="1313"/>
    </location>
</feature>
<feature type="transmembrane region" description="Helical; Name=S4 of repeat III" evidence="3">
    <location>
        <begin position="1314"/>
        <end position="1332"/>
    </location>
</feature>
<feature type="topological domain" description="Cytoplasmic" evidence="9">
    <location>
        <begin position="1333"/>
        <end position="1345"/>
    </location>
</feature>
<feature type="transmembrane region" description="Helical; Name=S5 of repeat III" evidence="3">
    <location>
        <begin position="1346"/>
        <end position="1369"/>
    </location>
</feature>
<feature type="topological domain" description="Extracellular" evidence="9">
    <location>
        <begin position="1370"/>
        <end position="1415"/>
    </location>
</feature>
<feature type="intramembrane region" description="Pore-forming" evidence="3">
    <location>
        <begin position="1416"/>
        <end position="1433"/>
    </location>
</feature>
<feature type="topological domain" description="Extracellular" evidence="9">
    <location>
        <begin position="1434"/>
        <end position="1457"/>
    </location>
</feature>
<feature type="transmembrane region" description="Helical; Name=S6 of repeat III" evidence="3">
    <location>
        <begin position="1458"/>
        <end position="1483"/>
    </location>
</feature>
<feature type="topological domain" description="Cytoplasmic" evidence="9">
    <location>
        <begin position="1484"/>
        <end position="1541"/>
    </location>
</feature>
<feature type="transmembrane region" description="Helical; Name=S1 of repeat IV" evidence="3">
    <location>
        <begin position="1542"/>
        <end position="1560"/>
    </location>
</feature>
<feature type="topological domain" description="Extracellular" evidence="9">
    <location>
        <begin position="1561"/>
        <end position="1571"/>
    </location>
</feature>
<feature type="transmembrane region" description="Helical; Name=S2 of repeat IV" evidence="3">
    <location>
        <begin position="1572"/>
        <end position="1593"/>
    </location>
</feature>
<feature type="topological domain" description="Cytoplasmic" evidence="9">
    <location>
        <begin position="1594"/>
        <end position="1601"/>
    </location>
</feature>
<feature type="transmembrane region" description="Helical; Name=S3 of repeat IV" evidence="3">
    <location>
        <begin position="1602"/>
        <end position="1623"/>
    </location>
</feature>
<feature type="topological domain" description="Extracellular" evidence="9">
    <location>
        <begin position="1624"/>
        <end position="1636"/>
    </location>
</feature>
<feature type="transmembrane region" description="Helical; Name=S4 of repeat IV" evidence="3">
    <location>
        <begin position="1637"/>
        <end position="1655"/>
    </location>
</feature>
<feature type="topological domain" description="Cytoplasmic" evidence="9">
    <location>
        <begin position="1656"/>
        <end position="1665"/>
    </location>
</feature>
<feature type="transmembrane region" description="Helical; Name=S5 of repeat IV" evidence="3">
    <location>
        <begin position="1666"/>
        <end position="1688"/>
    </location>
</feature>
<feature type="topological domain" description="Extracellular" evidence="9">
    <location>
        <begin position="1689"/>
        <end position="1711"/>
    </location>
</feature>
<feature type="intramembrane region" description="Pore-forming" evidence="3">
    <location>
        <begin position="1712"/>
        <end position="1726"/>
    </location>
</feature>
<feature type="topological domain" description="Extracellular" evidence="9">
    <location>
        <begin position="1727"/>
        <end position="1759"/>
    </location>
</feature>
<feature type="transmembrane region" description="Helical; Name=S6 of repeat IV" evidence="3">
    <location>
        <begin position="1760"/>
        <end position="1788"/>
    </location>
</feature>
<feature type="topological domain" description="Cytoplasmic" evidence="9">
    <location>
        <begin position="1789"/>
        <end position="2009"/>
    </location>
</feature>
<feature type="repeat" description="I" evidence="9">
    <location>
        <begin position="110"/>
        <end position="454"/>
    </location>
</feature>
<feature type="repeat" description="II" evidence="9">
    <location>
        <begin position="750"/>
        <end position="1022"/>
    </location>
</feature>
<feature type="repeat" description="III" evidence="9">
    <location>
        <begin position="1200"/>
        <end position="1514"/>
    </location>
</feature>
<feature type="repeat" description="IV" evidence="9">
    <location>
        <begin position="1523"/>
        <end position="1821"/>
    </location>
</feature>
<feature type="domain" description="IQ" evidence="5">
    <location>
        <begin position="1915"/>
        <end position="1944"/>
    </location>
</feature>
<feature type="region of interest" description="Disordered" evidence="6">
    <location>
        <begin position="28"/>
        <end position="60"/>
    </location>
</feature>
<feature type="region of interest" description="Disordered" evidence="6">
    <location>
        <begin position="458"/>
        <end position="528"/>
    </location>
</feature>
<feature type="region of interest" description="Disordered" evidence="6">
    <location>
        <begin position="584"/>
        <end position="628"/>
    </location>
</feature>
<feature type="region of interest" description="Disordered" evidence="6">
    <location>
        <begin position="1129"/>
        <end position="1163"/>
    </location>
</feature>
<feature type="region of interest" description="S1-S2 loop of repeat IV" evidence="1">
    <location>
        <begin position="1561"/>
        <end position="1571"/>
    </location>
</feature>
<feature type="region of interest" description="S3b-S4 loop of repeat IV" evidence="1">
    <location>
        <begin position="1619"/>
        <end position="1636"/>
    </location>
</feature>
<feature type="region of interest" description="Disordered" evidence="6">
    <location>
        <begin position="1986"/>
        <end position="2009"/>
    </location>
</feature>
<feature type="compositionally biased region" description="Basic and acidic residues" evidence="6">
    <location>
        <begin position="28"/>
        <end position="48"/>
    </location>
</feature>
<feature type="compositionally biased region" description="Low complexity" evidence="6">
    <location>
        <begin position="479"/>
        <end position="492"/>
    </location>
</feature>
<feature type="compositionally biased region" description="Basic residues" evidence="6">
    <location>
        <begin position="495"/>
        <end position="506"/>
    </location>
</feature>
<feature type="compositionally biased region" description="Basic and acidic residues" evidence="6">
    <location>
        <begin position="507"/>
        <end position="528"/>
    </location>
</feature>
<feature type="compositionally biased region" description="Basic and acidic residues" evidence="6">
    <location>
        <begin position="593"/>
        <end position="607"/>
    </location>
</feature>
<feature type="compositionally biased region" description="Basic and acidic residues" evidence="6">
    <location>
        <begin position="1988"/>
        <end position="2009"/>
    </location>
</feature>
<feature type="modified residue" description="Phosphoserine" evidence="7">
    <location>
        <position position="470"/>
    </location>
</feature>
<feature type="modified residue" description="Phosphoserine" evidence="11">
    <location>
        <position position="523"/>
    </location>
</feature>
<feature type="modified residue" description="Phosphoserine" evidence="11">
    <location>
        <position position="525"/>
    </location>
</feature>
<feature type="modified residue" description="Phosphoserine" evidence="11">
    <location>
        <position position="550"/>
    </location>
</feature>
<feature type="modified residue" description="Phosphoserine" evidence="7 11">
    <location>
        <position position="551"/>
    </location>
</feature>
<feature type="modified residue" description="Phosphoserine" evidence="7">
    <location>
        <position position="607"/>
    </location>
</feature>
<feature type="modified residue" description="Phosphoserine" evidence="11">
    <location>
        <position position="730"/>
    </location>
</feature>
<feature type="modified residue" description="Phosphoserine; by PKC" evidence="2">
    <location>
        <position position="1516"/>
    </location>
</feature>
<feature type="glycosylation site" description="N-linked (GlcNAc...) asparagine" evidence="4">
    <location>
        <position position="211"/>
    </location>
</feature>
<feature type="glycosylation site" description="N-linked (GlcNAc...) asparagine" evidence="4">
    <location>
        <position position="284"/>
    </location>
</feature>
<feature type="glycosylation site" description="N-linked (GlcNAc...) asparagine" evidence="4">
    <location>
        <position position="295"/>
    </location>
</feature>
<feature type="glycosylation site" description="N-linked (GlcNAc...) asparagine" evidence="4">
    <location>
        <position position="301"/>
    </location>
</feature>
<feature type="glycosylation site" description="N-linked (GlcNAc...) asparagine" evidence="4">
    <location>
        <position position="306"/>
    </location>
</feature>
<feature type="glycosylation site" description="N-linked (GlcNAc...) asparagine" evidence="4">
    <location>
        <position position="338"/>
    </location>
</feature>
<feature type="glycosylation site" description="N-linked (GlcNAc...) asparagine" evidence="4">
    <location>
        <position position="1378"/>
    </location>
</feature>
<feature type="glycosylation site" description="N-linked (GlcNAc...) asparagine" evidence="4">
    <location>
        <position position="1392"/>
    </location>
</feature>
<feature type="glycosylation site" description="N-linked (GlcNAc...) asparagine" evidence="4">
    <location>
        <position position="1403"/>
    </location>
</feature>
<feature type="disulfide bond" evidence="3">
    <location>
        <begin position="277"/>
        <end position="345"/>
    </location>
</feature>
<feature type="disulfide bond" evidence="3">
    <location>
        <begin position="336"/>
        <end position="351"/>
    </location>
</feature>
<feature type="disulfide bond" description="Interchain; with SCN2B or SCN4B" evidence="3">
    <location>
        <position position="919"/>
    </location>
</feature>
<feature type="disulfide bond" description="Interchain; with the conotoxin GVIIJ (when the channel is not linked to SCN2B or SCN4B; the bond to SCN2B or SCN4B protects the channel from the inhibition by toxin)" evidence="2">
    <location>
        <position position="919"/>
    </location>
</feature>
<feature type="disulfide bond" evidence="3">
    <location>
        <begin position="921"/>
        <end position="927"/>
    </location>
</feature>
<feature type="disulfide bond" evidence="3">
    <location>
        <begin position="959"/>
        <end position="968"/>
    </location>
</feature>
<feature type="disulfide bond" evidence="3">
    <location>
        <begin position="1376"/>
        <end position="1396"/>
    </location>
</feature>
<feature type="disulfide bond" evidence="3">
    <location>
        <begin position="1741"/>
        <end position="1756"/>
    </location>
</feature>
<evidence type="ECO:0000250" key="1">
    <source>
        <dbReference type="UniProtKB" id="A2APX8"/>
    </source>
</evidence>
<evidence type="ECO:0000250" key="2">
    <source>
        <dbReference type="UniProtKB" id="P04775"/>
    </source>
</evidence>
<evidence type="ECO:0000250" key="3">
    <source>
        <dbReference type="UniProtKB" id="P35498"/>
    </source>
</evidence>
<evidence type="ECO:0000255" key="4"/>
<evidence type="ECO:0000255" key="5">
    <source>
        <dbReference type="PROSITE-ProRule" id="PRU00116"/>
    </source>
</evidence>
<evidence type="ECO:0000256" key="6">
    <source>
        <dbReference type="SAM" id="MobiDB-lite"/>
    </source>
</evidence>
<evidence type="ECO:0000269" key="7">
    <source>
    </source>
</evidence>
<evidence type="ECO:0000269" key="8">
    <source>
    </source>
</evidence>
<evidence type="ECO:0000305" key="9"/>
<evidence type="ECO:0000312" key="10">
    <source>
        <dbReference type="RGD" id="69364"/>
    </source>
</evidence>
<evidence type="ECO:0007744" key="11">
    <source>
    </source>
</evidence>
<proteinExistence type="evidence at protein level"/>
<reference key="1">
    <citation type="journal article" date="1986" name="Nature">
        <title>Existence of distinct sodium channel messenger RNAs in rat brain.</title>
        <authorList>
            <person name="Noda M."/>
            <person name="Ikeda T."/>
            <person name="Kayano T."/>
            <person name="Suzuki H."/>
            <person name="Takeshima H."/>
            <person name="Kurasaki M."/>
            <person name="Takahashi H."/>
            <person name="Numa S."/>
        </authorList>
    </citation>
    <scope>NUCLEOTIDE SEQUENCE [MRNA]</scope>
</reference>
<reference key="2">
    <citation type="journal article" date="1987" name="J. Recept. Res.">
        <title>Structure and function of sodium channel.</title>
        <authorList>
            <person name="Noda M."/>
            <person name="Numa S."/>
        </authorList>
    </citation>
    <scope>NUCLEOTIDE SEQUENCE [MRNA]</scope>
</reference>
<reference key="3">
    <citation type="journal article" date="1991" name="Nucleic Acids Res.">
        <title>Developmentally regulated alternative RNA splicing of rat brain sodium channel mRNAs.</title>
        <authorList>
            <person name="Sarao R."/>
            <person name="Gupta S.K."/>
            <person name="Auld V.J."/>
            <person name="Dunn R.J."/>
        </authorList>
    </citation>
    <scope>NUCLEOTIDE SEQUENCE [MRNA] OF 177-253</scope>
    <source>
        <strain>Sprague-Dawley</strain>
        <tissue>Brain</tissue>
    </source>
</reference>
<reference key="4">
    <citation type="journal article" date="2010" name="J. Proteome Res.">
        <title>Multisite phosphorylation of voltage-gated sodium channel alpha subunits from rat brain.</title>
        <authorList>
            <person name="Berendt F.J."/>
            <person name="Park K.S."/>
            <person name="Trimmer J.S."/>
        </authorList>
    </citation>
    <scope>PHOSPHORYLATION AT SER-470; SER-551 AND SER-607</scope>
</reference>
<reference key="5">
    <citation type="journal article" date="2012" name="Nat. Commun.">
        <title>Quantitative maps of protein phosphorylation sites across 14 different rat organs and tissues.</title>
        <authorList>
            <person name="Lundby A."/>
            <person name="Secher A."/>
            <person name="Lage K."/>
            <person name="Nordsborg N.B."/>
            <person name="Dmytriyev A."/>
            <person name="Lundby C."/>
            <person name="Olsen J.V."/>
        </authorList>
    </citation>
    <scope>PHOSPHORYLATION [LARGE SCALE ANALYSIS] AT SER-523; SER-525; SER-550; SER-551 AND SER-730</scope>
    <scope>IDENTIFICATION BY MASS SPECTROMETRY [LARGE SCALE ANALYSIS]</scope>
</reference>
<reference key="6">
    <citation type="journal article" date="2014" name="Proc. Natl. Acad. Sci. U.S.A.">
        <title>A disulfide tether stabilizes the block of sodium channels by the conotoxin muO[section sign]-GVIIJ.</title>
        <authorList>
            <person name="Gajewiak J."/>
            <person name="Azam L."/>
            <person name="Imperial J."/>
            <person name="Walewska A."/>
            <person name="Green B.R."/>
            <person name="Bandyopadhyay P.K."/>
            <person name="Raghuraman S."/>
            <person name="Ueberheide B."/>
            <person name="Bern M."/>
            <person name="Zhou H.M."/>
            <person name="Minassian N.A."/>
            <person name="Hagan R.H."/>
            <person name="Flinspach M."/>
            <person name="Liu Y."/>
            <person name="Bulaj G."/>
            <person name="Wickenden A.D."/>
            <person name="Olivera B.M."/>
            <person name="Yoshikami D."/>
            <person name="Zhang M.M."/>
        </authorList>
    </citation>
    <scope>ACTIVITY REGULATION</scope>
</reference>
<keyword id="KW-1003">Cell membrane</keyword>
<keyword id="KW-1015">Disulfide bond</keyword>
<keyword id="KW-0325">Glycoprotein</keyword>
<keyword id="KW-0407">Ion channel</keyword>
<keyword id="KW-0406">Ion transport</keyword>
<keyword id="KW-0472">Membrane</keyword>
<keyword id="KW-0597">Phosphoprotein</keyword>
<keyword id="KW-1185">Reference proteome</keyword>
<keyword id="KW-0677">Repeat</keyword>
<keyword id="KW-0915">Sodium</keyword>
<keyword id="KW-0894">Sodium channel</keyword>
<keyword id="KW-0739">Sodium transport</keyword>
<keyword id="KW-0812">Transmembrane</keyword>
<keyword id="KW-1133">Transmembrane helix</keyword>
<keyword id="KW-0813">Transport</keyword>
<keyword id="KW-0851">Voltage-gated channel</keyword>
<dbReference type="EMBL" id="X03638">
    <property type="protein sequence ID" value="CAA27286.1"/>
    <property type="molecule type" value="mRNA"/>
</dbReference>
<dbReference type="EMBL" id="M22253">
    <property type="protein sequence ID" value="AAA79965.1"/>
    <property type="molecule type" value="mRNA"/>
</dbReference>
<dbReference type="PIR" id="A25019">
    <property type="entry name" value="A25019"/>
</dbReference>
<dbReference type="RefSeq" id="NP_110502.1">
    <property type="nucleotide sequence ID" value="NM_030875.1"/>
</dbReference>
<dbReference type="BMRB" id="P04774"/>
<dbReference type="SMR" id="P04774"/>
<dbReference type="BioGRID" id="249530">
    <property type="interactions" value="3"/>
</dbReference>
<dbReference type="CORUM" id="P04774"/>
<dbReference type="FunCoup" id="P04774">
    <property type="interactions" value="2314"/>
</dbReference>
<dbReference type="STRING" id="10116.ENSRNOP00000073986"/>
<dbReference type="BindingDB" id="P04774"/>
<dbReference type="ChEMBL" id="CHEMBL4906"/>
<dbReference type="DrugCentral" id="P04774"/>
<dbReference type="GuidetoPHARMACOLOGY" id="578"/>
<dbReference type="GlyCosmos" id="P04774">
    <property type="glycosylation" value="9 sites, No reported glycans"/>
</dbReference>
<dbReference type="GlyGen" id="P04774">
    <property type="glycosylation" value="9 sites"/>
</dbReference>
<dbReference type="iPTMnet" id="P04774"/>
<dbReference type="PhosphoSitePlus" id="P04774"/>
<dbReference type="SwissPalm" id="P04774"/>
<dbReference type="PaxDb" id="10116-ENSRNOP00000008026"/>
<dbReference type="ABCD" id="P04774">
    <property type="antibodies" value="3 sequenced antibodies"/>
</dbReference>
<dbReference type="GeneID" id="81574"/>
<dbReference type="KEGG" id="rno:81574"/>
<dbReference type="UCSC" id="RGD:69364">
    <property type="organism name" value="rat"/>
</dbReference>
<dbReference type="AGR" id="RGD:69364"/>
<dbReference type="CTD" id="6323"/>
<dbReference type="RGD" id="69364">
    <property type="gene designation" value="Scn1a"/>
</dbReference>
<dbReference type="eggNOG" id="KOG2301">
    <property type="taxonomic scope" value="Eukaryota"/>
</dbReference>
<dbReference type="InParanoid" id="P04774"/>
<dbReference type="PhylomeDB" id="P04774"/>
<dbReference type="PRO" id="PR:P04774"/>
<dbReference type="Proteomes" id="UP000002494">
    <property type="component" value="Unplaced"/>
</dbReference>
<dbReference type="GO" id="GO:0030424">
    <property type="term" value="C:axon"/>
    <property type="evidence" value="ECO:0000266"/>
    <property type="project" value="RGD"/>
</dbReference>
<dbReference type="GO" id="GO:0043194">
    <property type="term" value="C:axon initial segment"/>
    <property type="evidence" value="ECO:0000266"/>
    <property type="project" value="RGD"/>
</dbReference>
<dbReference type="GO" id="GO:0014704">
    <property type="term" value="C:intercalated disc"/>
    <property type="evidence" value="ECO:0000266"/>
    <property type="project" value="RGD"/>
</dbReference>
<dbReference type="GO" id="GO:0016020">
    <property type="term" value="C:membrane"/>
    <property type="evidence" value="ECO:0000266"/>
    <property type="project" value="RGD"/>
</dbReference>
<dbReference type="GO" id="GO:0043025">
    <property type="term" value="C:neuronal cell body"/>
    <property type="evidence" value="ECO:0000266"/>
    <property type="project" value="RGD"/>
</dbReference>
<dbReference type="GO" id="GO:0033268">
    <property type="term" value="C:node of Ranvier"/>
    <property type="evidence" value="ECO:0000266"/>
    <property type="project" value="RGD"/>
</dbReference>
<dbReference type="GO" id="GO:0005886">
    <property type="term" value="C:plasma membrane"/>
    <property type="evidence" value="ECO:0000266"/>
    <property type="project" value="RGD"/>
</dbReference>
<dbReference type="GO" id="GO:0042734">
    <property type="term" value="C:presynaptic membrane"/>
    <property type="evidence" value="ECO:0000314"/>
    <property type="project" value="SynGO"/>
</dbReference>
<dbReference type="GO" id="GO:0034706">
    <property type="term" value="C:sodium channel complex"/>
    <property type="evidence" value="ECO:0000266"/>
    <property type="project" value="RGD"/>
</dbReference>
<dbReference type="GO" id="GO:0030315">
    <property type="term" value="C:T-tubule"/>
    <property type="evidence" value="ECO:0000266"/>
    <property type="project" value="RGD"/>
</dbReference>
<dbReference type="GO" id="GO:0001518">
    <property type="term" value="C:voltage-gated sodium channel complex"/>
    <property type="evidence" value="ECO:0000318"/>
    <property type="project" value="GO_Central"/>
</dbReference>
<dbReference type="GO" id="GO:0030018">
    <property type="term" value="C:Z disc"/>
    <property type="evidence" value="ECO:0000250"/>
    <property type="project" value="BHF-UCL"/>
</dbReference>
<dbReference type="GO" id="GO:0099508">
    <property type="term" value="F:voltage-gated monoatomic ion channel activity involved in regulation of presynaptic membrane potential"/>
    <property type="evidence" value="ECO:0000266"/>
    <property type="project" value="RGD"/>
</dbReference>
<dbReference type="GO" id="GO:0005248">
    <property type="term" value="F:voltage-gated sodium channel activity"/>
    <property type="evidence" value="ECO:0000315"/>
    <property type="project" value="RGD"/>
</dbReference>
<dbReference type="GO" id="GO:0007628">
    <property type="term" value="P:adult walking behavior"/>
    <property type="evidence" value="ECO:0000266"/>
    <property type="project" value="RGD"/>
</dbReference>
<dbReference type="GO" id="GO:0086002">
    <property type="term" value="P:cardiac muscle cell action potential involved in contraction"/>
    <property type="evidence" value="ECO:0000266"/>
    <property type="project" value="RGD"/>
</dbReference>
<dbReference type="GO" id="GO:0050966">
    <property type="term" value="P:detection of mechanical stimulus involved in sensory perception of pain"/>
    <property type="evidence" value="ECO:0000250"/>
    <property type="project" value="UniProtKB"/>
</dbReference>
<dbReference type="GO" id="GO:0008340">
    <property type="term" value="P:determination of adult lifespan"/>
    <property type="evidence" value="ECO:0000266"/>
    <property type="project" value="RGD"/>
</dbReference>
<dbReference type="GO" id="GO:0051649">
    <property type="term" value="P:establishment of localization in cell"/>
    <property type="evidence" value="ECO:0000266"/>
    <property type="project" value="RGD"/>
</dbReference>
<dbReference type="GO" id="GO:0086010">
    <property type="term" value="P:membrane depolarization during action potential"/>
    <property type="evidence" value="ECO:0000250"/>
    <property type="project" value="UniProtKB"/>
</dbReference>
<dbReference type="GO" id="GO:0021675">
    <property type="term" value="P:nerve development"/>
    <property type="evidence" value="ECO:0000266"/>
    <property type="project" value="RGD"/>
</dbReference>
<dbReference type="GO" id="GO:0050884">
    <property type="term" value="P:neuromuscular process controlling posture"/>
    <property type="evidence" value="ECO:0000266"/>
    <property type="project" value="RGD"/>
</dbReference>
<dbReference type="GO" id="GO:0019228">
    <property type="term" value="P:neuronal action potential"/>
    <property type="evidence" value="ECO:0000314"/>
    <property type="project" value="RGD"/>
</dbReference>
<dbReference type="GO" id="GO:0019227">
    <property type="term" value="P:neuronal action potential propagation"/>
    <property type="evidence" value="ECO:0000266"/>
    <property type="project" value="RGD"/>
</dbReference>
<dbReference type="GO" id="GO:0042391">
    <property type="term" value="P:regulation of membrane potential"/>
    <property type="evidence" value="ECO:0000266"/>
    <property type="project" value="RGD"/>
</dbReference>
<dbReference type="GO" id="GO:0006814">
    <property type="term" value="P:sodium ion transport"/>
    <property type="evidence" value="ECO:0000266"/>
    <property type="project" value="RGD"/>
</dbReference>
<dbReference type="CDD" id="cd13433">
    <property type="entry name" value="Na_channel_gate"/>
    <property type="match status" value="1"/>
</dbReference>
<dbReference type="FunFam" id="1.10.238.10:FF:000002">
    <property type="entry name" value="Sodium channel protein"/>
    <property type="match status" value="1"/>
</dbReference>
<dbReference type="FunFam" id="1.10.287.70:FF:000001">
    <property type="entry name" value="Sodium channel protein"/>
    <property type="match status" value="1"/>
</dbReference>
<dbReference type="FunFam" id="1.10.287.70:FF:000006">
    <property type="entry name" value="Sodium channel protein"/>
    <property type="match status" value="1"/>
</dbReference>
<dbReference type="FunFam" id="1.20.120.350:FF:000002">
    <property type="entry name" value="Sodium channel protein"/>
    <property type="match status" value="1"/>
</dbReference>
<dbReference type="FunFam" id="1.20.120.350:FF:000004">
    <property type="entry name" value="Sodium channel protein"/>
    <property type="match status" value="1"/>
</dbReference>
<dbReference type="FunFam" id="1.20.120.350:FF:000005">
    <property type="entry name" value="Sodium channel protein"/>
    <property type="match status" value="1"/>
</dbReference>
<dbReference type="FunFam" id="1.20.5.1190:FF:000001">
    <property type="entry name" value="Sodium channel protein"/>
    <property type="match status" value="1"/>
</dbReference>
<dbReference type="FunFam" id="1.20.120.350:FF:000003">
    <property type="entry name" value="Voltage-dependent sodium channel"/>
    <property type="match status" value="1"/>
</dbReference>
<dbReference type="Gene3D" id="1.10.287.70">
    <property type="match status" value="4"/>
</dbReference>
<dbReference type="Gene3D" id="1.10.238.10">
    <property type="entry name" value="EF-hand"/>
    <property type="match status" value="1"/>
</dbReference>
<dbReference type="Gene3D" id="1.20.5.1190">
    <property type="entry name" value="iswi atpase"/>
    <property type="match status" value="1"/>
</dbReference>
<dbReference type="Gene3D" id="1.20.120.350">
    <property type="entry name" value="Voltage-gated potassium channels. Chain C"/>
    <property type="match status" value="4"/>
</dbReference>
<dbReference type="InterPro" id="IPR005821">
    <property type="entry name" value="Ion_trans_dom"/>
</dbReference>
<dbReference type="InterPro" id="IPR008051">
    <property type="entry name" value="Na_channel_a1su"/>
</dbReference>
<dbReference type="InterPro" id="IPR001696">
    <property type="entry name" value="Na_channel_asu"/>
</dbReference>
<dbReference type="InterPro" id="IPR044564">
    <property type="entry name" value="Na_chnl_inactivation_gate"/>
</dbReference>
<dbReference type="InterPro" id="IPR010526">
    <property type="entry name" value="Na_trans_assoc_dom"/>
</dbReference>
<dbReference type="InterPro" id="IPR024583">
    <property type="entry name" value="Na_trans_cytopl"/>
</dbReference>
<dbReference type="InterPro" id="IPR043203">
    <property type="entry name" value="VGCC_Ca_Na"/>
</dbReference>
<dbReference type="InterPro" id="IPR027359">
    <property type="entry name" value="Volt_channel_dom_sf"/>
</dbReference>
<dbReference type="PANTHER" id="PTHR10037:SF280">
    <property type="entry name" value="SODIUM CHANNEL PROTEIN TYPE 1 SUBUNIT ALPHA"/>
    <property type="match status" value="1"/>
</dbReference>
<dbReference type="PANTHER" id="PTHR10037">
    <property type="entry name" value="VOLTAGE-GATED CATION CHANNEL CALCIUM AND SODIUM"/>
    <property type="match status" value="1"/>
</dbReference>
<dbReference type="Pfam" id="PF00520">
    <property type="entry name" value="Ion_trans"/>
    <property type="match status" value="4"/>
</dbReference>
<dbReference type="Pfam" id="PF24609">
    <property type="entry name" value="IQ_SCN5A_C"/>
    <property type="match status" value="1"/>
</dbReference>
<dbReference type="Pfam" id="PF06512">
    <property type="entry name" value="Na_trans_assoc"/>
    <property type="match status" value="1"/>
</dbReference>
<dbReference type="Pfam" id="PF11933">
    <property type="entry name" value="Na_trans_cytopl"/>
    <property type="match status" value="1"/>
</dbReference>
<dbReference type="PRINTS" id="PR00170">
    <property type="entry name" value="NACHANNEL"/>
</dbReference>
<dbReference type="PRINTS" id="PR01664">
    <property type="entry name" value="NACHANNEL1"/>
</dbReference>
<dbReference type="SUPFAM" id="SSF81324">
    <property type="entry name" value="Voltage-gated potassium channels"/>
    <property type="match status" value="4"/>
</dbReference>
<comment type="function">
    <text evidence="1 3">Pore-forming subunit of Nav1.1, a voltage-gated sodium (Nav) channel that directly mediates the depolarizing phase of action potentials in excitable membranes. Navs, also called VGSCs (voltage-gated sodium channels) or VDSCs (voltage-dependent sodium channels), operate by switching between closed and open conformations depending on the voltage difference across the membrane. In the open conformation they allow Na(+) ions to selectively pass through the pore, along their electrochemical gradient. The influx of Na(+) ions provokes membrane depolarization, initiating the propagation of electrical signals throughout cells and tissues (By similarity). By regulating the excitability of neurons, ensures that they respond appropriately to synaptic inputs, maintaining the balance between excitation and inhibition in brain neural circuits. Nav1.1 plays a role in controlling the excitability and action potential propagation from somatosensory neurons, thereby contributing to the sensory perception of mechanically-induced pain (By similarity).</text>
</comment>
<comment type="catalytic activity">
    <reaction evidence="3">
        <text>Na(+)(in) = Na(+)(out)</text>
        <dbReference type="Rhea" id="RHEA:34963"/>
        <dbReference type="ChEBI" id="CHEBI:29101"/>
    </reaction>
</comment>
<comment type="activity regulation">
    <text evidence="1 8">Activated by the spider toxins Hm1a and Hm1b (H.maculata, AC P60992 and AC P0DOC5) eliciting acute pain and mechanical allodynia (By similarity). Inhibited by the conotoxin GVIIJ (PubMed:24497506).</text>
</comment>
<comment type="subunit">
    <text evidence="3">The Nav1.1 voltage-gated sodium channel consists of an ion-conducting alpha subunit SCN1A which is functional on its own regulated by one or more beta-1 (SCN1B), beta-2 (SCN2B), beta-3 (SCN3B) and beta-4 (SCN4B) subunits. SCN1B and SCN3B are non-covalently associated with SCN1A. SCN2B and SCN4B are disulfide-linked to SCN1A. SCN1B regulates both the expression at the plasma membrane and the voltage dependence of Nav1.1 inactivation. SCN3B and SCN4B reduce Nav1.1 conductance. Probably interacts with TMEM233; modulates the gating properties of NaV1.1. Interacts with FGF13; regulates the steady-state inactivation of Nav.1.1.</text>
</comment>
<comment type="subcellular location">
    <subcellularLocation>
        <location evidence="3">Cell membrane</location>
        <topology evidence="3">Multi-pass membrane protein</topology>
    </subcellularLocation>
</comment>
<comment type="domain">
    <text evidence="9">The sequence contains 4 internal repeats, each with 5 hydrophobic segments (S1, S2, S3, S5, S6) and one positively charged segment (S4). Segments S4 are probably the voltage-sensors and are characterized by a series of positively charged amino acids at every third position.</text>
</comment>
<comment type="domain">
    <text evidence="1">The S3b-S4 and S1-S2 loops of repeat IV are targeted by H.maculata toxins Hm1a and Hm1b, leading to inhibit fast inactivation of Nav1.1/SCN1A. Selectivity for H.maculata toxins Hm1a and Hm1b depends on S1-S2 loops of repeat IV.</text>
</comment>
<comment type="PTM">
    <text evidence="2">Phosphorylation at Ser-1516 by PKC in a highly conserved cytoplasmic loop slows inactivation of the sodium channel and reduces peak sodium currents.</text>
</comment>
<comment type="similarity">
    <text evidence="9">Belongs to the sodium channel (TC 1.A.1.10) family. Nav1.1/SCN1A subfamily.</text>
</comment>
<organism>
    <name type="scientific">Rattus norvegicus</name>
    <name type="common">Rat</name>
    <dbReference type="NCBI Taxonomy" id="10116"/>
    <lineage>
        <taxon>Eukaryota</taxon>
        <taxon>Metazoa</taxon>
        <taxon>Chordata</taxon>
        <taxon>Craniata</taxon>
        <taxon>Vertebrata</taxon>
        <taxon>Euteleostomi</taxon>
        <taxon>Mammalia</taxon>
        <taxon>Eutheria</taxon>
        <taxon>Euarchontoglires</taxon>
        <taxon>Glires</taxon>
        <taxon>Rodentia</taxon>
        <taxon>Myomorpha</taxon>
        <taxon>Muroidea</taxon>
        <taxon>Muridae</taxon>
        <taxon>Murinae</taxon>
        <taxon>Rattus</taxon>
    </lineage>
</organism>